<proteinExistence type="inferred from homology"/>
<reference key="1">
    <citation type="journal article" date="2001" name="Science">
        <title>Comparative genomics of Listeria species.</title>
        <authorList>
            <person name="Glaser P."/>
            <person name="Frangeul L."/>
            <person name="Buchrieser C."/>
            <person name="Rusniok C."/>
            <person name="Amend A."/>
            <person name="Baquero F."/>
            <person name="Berche P."/>
            <person name="Bloecker H."/>
            <person name="Brandt P."/>
            <person name="Chakraborty T."/>
            <person name="Charbit A."/>
            <person name="Chetouani F."/>
            <person name="Couve E."/>
            <person name="de Daruvar A."/>
            <person name="Dehoux P."/>
            <person name="Domann E."/>
            <person name="Dominguez-Bernal G."/>
            <person name="Duchaud E."/>
            <person name="Durant L."/>
            <person name="Dussurget O."/>
            <person name="Entian K.-D."/>
            <person name="Fsihi H."/>
            <person name="Garcia-del Portillo F."/>
            <person name="Garrido P."/>
            <person name="Gautier L."/>
            <person name="Goebel W."/>
            <person name="Gomez-Lopez N."/>
            <person name="Hain T."/>
            <person name="Hauf J."/>
            <person name="Jackson D."/>
            <person name="Jones L.-M."/>
            <person name="Kaerst U."/>
            <person name="Kreft J."/>
            <person name="Kuhn M."/>
            <person name="Kunst F."/>
            <person name="Kurapkat G."/>
            <person name="Madueno E."/>
            <person name="Maitournam A."/>
            <person name="Mata Vicente J."/>
            <person name="Ng E."/>
            <person name="Nedjari H."/>
            <person name="Nordsiek G."/>
            <person name="Novella S."/>
            <person name="de Pablos B."/>
            <person name="Perez-Diaz J.-C."/>
            <person name="Purcell R."/>
            <person name="Remmel B."/>
            <person name="Rose M."/>
            <person name="Schlueter T."/>
            <person name="Simoes N."/>
            <person name="Tierrez A."/>
            <person name="Vazquez-Boland J.-A."/>
            <person name="Voss H."/>
            <person name="Wehland J."/>
            <person name="Cossart P."/>
        </authorList>
    </citation>
    <scope>NUCLEOTIDE SEQUENCE [LARGE SCALE GENOMIC DNA]</scope>
    <source>
        <strain>ATCC BAA-679 / EGD-e</strain>
    </source>
</reference>
<name>Y1318_LISMO</name>
<gene>
    <name type="ordered locus">lmo1318</name>
</gene>
<comment type="cofactor">
    <cofactor evidence="4">
        <name>Zn(2+)</name>
        <dbReference type="ChEBI" id="CHEBI:29105"/>
    </cofactor>
</comment>
<comment type="subcellular location">
    <subcellularLocation>
        <location evidence="4">Cell membrane</location>
        <topology evidence="4">Multi-pass membrane protein</topology>
    </subcellularLocation>
</comment>
<comment type="similarity">
    <text evidence="4">Belongs to the peptidase M50B family.</text>
</comment>
<dbReference type="EC" id="3.4.24.-"/>
<dbReference type="EMBL" id="AL591978">
    <property type="protein sequence ID" value="CAC99396.1"/>
    <property type="molecule type" value="Genomic_DNA"/>
</dbReference>
<dbReference type="PIR" id="AF1239">
    <property type="entry name" value="AF1239"/>
</dbReference>
<dbReference type="RefSeq" id="NP_464843.1">
    <property type="nucleotide sequence ID" value="NC_003210.1"/>
</dbReference>
<dbReference type="SMR" id="Q8Y7G3"/>
<dbReference type="STRING" id="169963.gene:17593975"/>
<dbReference type="MEROPS" id="M50.A11"/>
<dbReference type="PaxDb" id="169963-lmo1318"/>
<dbReference type="DNASU" id="987698"/>
<dbReference type="EnsemblBacteria" id="CAC99396">
    <property type="protein sequence ID" value="CAC99396"/>
    <property type="gene ID" value="CAC99396"/>
</dbReference>
<dbReference type="GeneID" id="987698"/>
<dbReference type="KEGG" id="lmo:lmo1318"/>
<dbReference type="PATRIC" id="fig|169963.11.peg.1355"/>
<dbReference type="eggNOG" id="COG0750">
    <property type="taxonomic scope" value="Bacteria"/>
</dbReference>
<dbReference type="HOGENOM" id="CLU_025778_1_0_9"/>
<dbReference type="OrthoDB" id="9782003at2"/>
<dbReference type="PhylomeDB" id="Q8Y7G3"/>
<dbReference type="BioCyc" id="LMON169963:LMO1318-MONOMER"/>
<dbReference type="Proteomes" id="UP000000817">
    <property type="component" value="Chromosome"/>
</dbReference>
<dbReference type="GO" id="GO:0005886">
    <property type="term" value="C:plasma membrane"/>
    <property type="evidence" value="ECO:0007669"/>
    <property type="project" value="UniProtKB-SubCell"/>
</dbReference>
<dbReference type="GO" id="GO:0046872">
    <property type="term" value="F:metal ion binding"/>
    <property type="evidence" value="ECO:0007669"/>
    <property type="project" value="UniProtKB-KW"/>
</dbReference>
<dbReference type="GO" id="GO:0004222">
    <property type="term" value="F:metalloendopeptidase activity"/>
    <property type="evidence" value="ECO:0007669"/>
    <property type="project" value="InterPro"/>
</dbReference>
<dbReference type="GO" id="GO:0006508">
    <property type="term" value="P:proteolysis"/>
    <property type="evidence" value="ECO:0007669"/>
    <property type="project" value="UniProtKB-KW"/>
</dbReference>
<dbReference type="CDD" id="cd23081">
    <property type="entry name" value="cpPDZ_EcRseP-like"/>
    <property type="match status" value="1"/>
</dbReference>
<dbReference type="CDD" id="cd06163">
    <property type="entry name" value="S2P-M50_PDZ_RseP-like"/>
    <property type="match status" value="1"/>
</dbReference>
<dbReference type="Gene3D" id="2.30.42.10">
    <property type="match status" value="1"/>
</dbReference>
<dbReference type="InterPro" id="IPR001478">
    <property type="entry name" value="PDZ"/>
</dbReference>
<dbReference type="InterPro" id="IPR036034">
    <property type="entry name" value="PDZ_sf"/>
</dbReference>
<dbReference type="InterPro" id="IPR004387">
    <property type="entry name" value="Pept_M50_Zn"/>
</dbReference>
<dbReference type="InterPro" id="IPR008915">
    <property type="entry name" value="Peptidase_M50"/>
</dbReference>
<dbReference type="NCBIfam" id="TIGR00054">
    <property type="entry name" value="RIP metalloprotease RseP"/>
    <property type="match status" value="1"/>
</dbReference>
<dbReference type="PANTHER" id="PTHR42837:SF2">
    <property type="entry name" value="MEMBRANE METALLOPROTEASE ARASP2, CHLOROPLASTIC-RELATED"/>
    <property type="match status" value="1"/>
</dbReference>
<dbReference type="PANTHER" id="PTHR42837">
    <property type="entry name" value="REGULATOR OF SIGMA-E PROTEASE RSEP"/>
    <property type="match status" value="1"/>
</dbReference>
<dbReference type="Pfam" id="PF13180">
    <property type="entry name" value="PDZ_2"/>
    <property type="match status" value="1"/>
</dbReference>
<dbReference type="Pfam" id="PF02163">
    <property type="entry name" value="Peptidase_M50"/>
    <property type="match status" value="1"/>
</dbReference>
<dbReference type="SMART" id="SM00228">
    <property type="entry name" value="PDZ"/>
    <property type="match status" value="1"/>
</dbReference>
<dbReference type="SUPFAM" id="SSF50156">
    <property type="entry name" value="PDZ domain-like"/>
    <property type="match status" value="1"/>
</dbReference>
<dbReference type="PROSITE" id="PS50106">
    <property type="entry name" value="PDZ"/>
    <property type="match status" value="1"/>
</dbReference>
<dbReference type="PROSITE" id="PS00142">
    <property type="entry name" value="ZINC_PROTEASE"/>
    <property type="match status" value="1"/>
</dbReference>
<feature type="chain" id="PRO_0000088447" description="Putative zinc metalloprotease Lmo1318">
    <location>
        <begin position="1"/>
        <end position="420"/>
    </location>
</feature>
<feature type="transmembrane region" description="Helical" evidence="1">
    <location>
        <begin position="172"/>
        <end position="194"/>
    </location>
</feature>
<feature type="transmembrane region" description="Helical" evidence="1">
    <location>
        <begin position="304"/>
        <end position="326"/>
    </location>
</feature>
<feature type="transmembrane region" description="Helical" evidence="1">
    <location>
        <begin position="347"/>
        <end position="369"/>
    </location>
</feature>
<feature type="transmembrane region" description="Helical" evidence="1">
    <location>
        <begin position="393"/>
        <end position="412"/>
    </location>
</feature>
<feature type="domain" description="PDZ" evidence="2">
    <location>
        <begin position="176"/>
        <end position="267"/>
    </location>
</feature>
<feature type="active site" evidence="3">
    <location>
        <position position="19"/>
    </location>
</feature>
<feature type="binding site" evidence="3">
    <location>
        <position position="18"/>
    </location>
    <ligand>
        <name>Zn(2+)</name>
        <dbReference type="ChEBI" id="CHEBI:29105"/>
        <note>catalytic</note>
    </ligand>
</feature>
<feature type="binding site" evidence="3">
    <location>
        <position position="22"/>
    </location>
    <ligand>
        <name>Zn(2+)</name>
        <dbReference type="ChEBI" id="CHEBI:29105"/>
        <note>catalytic</note>
    </ligand>
</feature>
<sequence length="420" mass="46717">MTTIIAFIFVFGLIVFFHELGHFLFAKRAGIMVKDFSIGFGPKIFAYRKKETQYTIRLLPIGGYVRMAGEDGEEIELKPGYRVGLELTPEETVSKIIVNGKDQYVNAQPIEVSLCDLEKELFIEGYEDYDDTKKVRYQVERDALVIDGKIETMITPYDRSFNAKSLGNRAMTIFAGPLFNFILAILIFTALAFVQGGVPSTDNTLGNVLPDGAAAEAGLKKGDEVLSINGKETKSWTDIVQNVSENPGKTLDFKIERDGKTQDIDVKPATQKENGKDVGKIGVETPMDSSFTAKITNGFTQTWNWIVQIFTILGNMFTGGFSLDMLNGPVGIYTSTQQVVQYGFMTVLNWTAVLSINLGIVNLLPLPALDGGRLMFFLYELVRGKPIDPKKEGIIHFAGFALLMVLMILVTWNDIQRAFF</sequence>
<accession>Q8Y7G3</accession>
<protein>
    <recommendedName>
        <fullName>Putative zinc metalloprotease Lmo1318</fullName>
        <ecNumber>3.4.24.-</ecNumber>
    </recommendedName>
</protein>
<keyword id="KW-1003">Cell membrane</keyword>
<keyword id="KW-0378">Hydrolase</keyword>
<keyword id="KW-0472">Membrane</keyword>
<keyword id="KW-0479">Metal-binding</keyword>
<keyword id="KW-0482">Metalloprotease</keyword>
<keyword id="KW-0645">Protease</keyword>
<keyword id="KW-1185">Reference proteome</keyword>
<keyword id="KW-0812">Transmembrane</keyword>
<keyword id="KW-1133">Transmembrane helix</keyword>
<keyword id="KW-0862">Zinc</keyword>
<evidence type="ECO:0000255" key="1"/>
<evidence type="ECO:0000255" key="2">
    <source>
        <dbReference type="PROSITE-ProRule" id="PRU00143"/>
    </source>
</evidence>
<evidence type="ECO:0000255" key="3">
    <source>
        <dbReference type="PROSITE-ProRule" id="PRU10095"/>
    </source>
</evidence>
<evidence type="ECO:0000305" key="4"/>
<organism>
    <name type="scientific">Listeria monocytogenes serovar 1/2a (strain ATCC BAA-679 / EGD-e)</name>
    <dbReference type="NCBI Taxonomy" id="169963"/>
    <lineage>
        <taxon>Bacteria</taxon>
        <taxon>Bacillati</taxon>
        <taxon>Bacillota</taxon>
        <taxon>Bacilli</taxon>
        <taxon>Bacillales</taxon>
        <taxon>Listeriaceae</taxon>
        <taxon>Listeria</taxon>
    </lineage>
</organism>